<name>TRM1_METTH</name>
<feature type="chain" id="PRO_0000147686" description="tRNA (guanine(26)-N(2))-dimethyltransferase">
    <location>
        <begin position="1"/>
        <end position="380"/>
    </location>
</feature>
<feature type="domain" description="Trm1 methyltransferase" evidence="1">
    <location>
        <begin position="2"/>
        <end position="374"/>
    </location>
</feature>
<feature type="binding site" evidence="1">
    <location>
        <position position="35"/>
    </location>
    <ligand>
        <name>S-adenosyl-L-methionine</name>
        <dbReference type="ChEBI" id="CHEBI:59789"/>
    </ligand>
</feature>
<feature type="binding site" evidence="1">
    <location>
        <position position="65"/>
    </location>
    <ligand>
        <name>S-adenosyl-L-methionine</name>
        <dbReference type="ChEBI" id="CHEBI:59789"/>
    </ligand>
</feature>
<feature type="binding site" evidence="1">
    <location>
        <position position="83"/>
    </location>
    <ligand>
        <name>S-adenosyl-L-methionine</name>
        <dbReference type="ChEBI" id="CHEBI:59789"/>
    </ligand>
</feature>
<feature type="binding site" evidence="1">
    <location>
        <position position="109"/>
    </location>
    <ligand>
        <name>S-adenosyl-L-methionine</name>
        <dbReference type="ChEBI" id="CHEBI:59789"/>
    </ligand>
</feature>
<feature type="binding site" evidence="1">
    <location>
        <position position="110"/>
    </location>
    <ligand>
        <name>S-adenosyl-L-methionine</name>
        <dbReference type="ChEBI" id="CHEBI:59789"/>
    </ligand>
</feature>
<feature type="binding site" evidence="1">
    <location>
        <position position="242"/>
    </location>
    <ligand>
        <name>Zn(2+)</name>
        <dbReference type="ChEBI" id="CHEBI:29105"/>
    </ligand>
</feature>
<feature type="binding site" evidence="1">
    <location>
        <position position="245"/>
    </location>
    <ligand>
        <name>Zn(2+)</name>
        <dbReference type="ChEBI" id="CHEBI:29105"/>
    </ligand>
</feature>
<feature type="binding site" evidence="1">
    <location>
        <position position="261"/>
    </location>
    <ligand>
        <name>Zn(2+)</name>
        <dbReference type="ChEBI" id="CHEBI:29105"/>
    </ligand>
</feature>
<feature type="binding site" evidence="1">
    <location>
        <position position="264"/>
    </location>
    <ligand>
        <name>Zn(2+)</name>
        <dbReference type="ChEBI" id="CHEBI:29105"/>
    </ligand>
</feature>
<protein>
    <recommendedName>
        <fullName evidence="1">tRNA (guanine(26)-N(2))-dimethyltransferase</fullName>
        <ecNumber evidence="1">2.1.1.216</ecNumber>
    </recommendedName>
    <alternativeName>
        <fullName evidence="1">tRNA 2,2-dimethylguanosine-26 methyltransferase</fullName>
    </alternativeName>
    <alternativeName>
        <fullName evidence="1">tRNA(guanine-26,N(2)-N(2)) methyltransferase</fullName>
    </alternativeName>
    <alternativeName>
        <fullName evidence="1">tRNA(m(2,2)G26)dimethyltransferase</fullName>
    </alternativeName>
</protein>
<proteinExistence type="inferred from homology"/>
<reference key="1">
    <citation type="journal article" date="1997" name="J. Bacteriol.">
        <title>Complete genome sequence of Methanobacterium thermoautotrophicum deltaH: functional analysis and comparative genomics.</title>
        <authorList>
            <person name="Smith D.R."/>
            <person name="Doucette-Stamm L.A."/>
            <person name="Deloughery C."/>
            <person name="Lee H.-M."/>
            <person name="Dubois J."/>
            <person name="Aldredge T."/>
            <person name="Bashirzadeh R."/>
            <person name="Blakely D."/>
            <person name="Cook R."/>
            <person name="Gilbert K."/>
            <person name="Harrison D."/>
            <person name="Hoang L."/>
            <person name="Keagle P."/>
            <person name="Lumm W."/>
            <person name="Pothier B."/>
            <person name="Qiu D."/>
            <person name="Spadafora R."/>
            <person name="Vicare R."/>
            <person name="Wang Y."/>
            <person name="Wierzbowski J."/>
            <person name="Gibson R."/>
            <person name="Jiwani N."/>
            <person name="Caruso A."/>
            <person name="Bush D."/>
            <person name="Safer H."/>
            <person name="Patwell D."/>
            <person name="Prabhakar S."/>
            <person name="McDougall S."/>
            <person name="Shimer G."/>
            <person name="Goyal A."/>
            <person name="Pietrovski S."/>
            <person name="Church G.M."/>
            <person name="Daniels C.J."/>
            <person name="Mao J.-I."/>
            <person name="Rice P."/>
            <person name="Noelling J."/>
            <person name="Reeve J.N."/>
        </authorList>
    </citation>
    <scope>NUCLEOTIDE SEQUENCE [LARGE SCALE GENOMIC DNA]</scope>
    <source>
        <strain>ATCC 29096 / DSM 1053 / JCM 10044 / NBRC 100330 / Delta H</strain>
    </source>
</reference>
<dbReference type="EC" id="2.1.1.216" evidence="1"/>
<dbReference type="EMBL" id="AE000666">
    <property type="protein sequence ID" value="AAB85679.1"/>
    <property type="molecule type" value="Genomic_DNA"/>
</dbReference>
<dbReference type="PIR" id="G69025">
    <property type="entry name" value="G69025"/>
</dbReference>
<dbReference type="RefSeq" id="WP_010876814.1">
    <property type="nucleotide sequence ID" value="NC_000916.1"/>
</dbReference>
<dbReference type="SMR" id="O27258"/>
<dbReference type="FunCoup" id="O27258">
    <property type="interactions" value="193"/>
</dbReference>
<dbReference type="STRING" id="187420.MTH_1190"/>
<dbReference type="PaxDb" id="187420-MTH_1190"/>
<dbReference type="EnsemblBacteria" id="AAB85679">
    <property type="protein sequence ID" value="AAB85679"/>
    <property type="gene ID" value="MTH_1190"/>
</dbReference>
<dbReference type="GeneID" id="1471598"/>
<dbReference type="KEGG" id="mth:MTH_1190"/>
<dbReference type="PATRIC" id="fig|187420.15.peg.1168"/>
<dbReference type="HOGENOM" id="CLU_010862_5_1_2"/>
<dbReference type="InParanoid" id="O27258"/>
<dbReference type="Proteomes" id="UP000005223">
    <property type="component" value="Chromosome"/>
</dbReference>
<dbReference type="GO" id="GO:0160104">
    <property type="term" value="F:tRNA (guanine(26)-N2)-dimethyltransferase activity"/>
    <property type="evidence" value="ECO:0007669"/>
    <property type="project" value="UniProtKB-UniRule"/>
</dbReference>
<dbReference type="GO" id="GO:0000049">
    <property type="term" value="F:tRNA binding"/>
    <property type="evidence" value="ECO:0007669"/>
    <property type="project" value="UniProtKB-KW"/>
</dbReference>
<dbReference type="GO" id="GO:0002940">
    <property type="term" value="P:tRNA N2-guanine methylation"/>
    <property type="evidence" value="ECO:0007669"/>
    <property type="project" value="TreeGrafter"/>
</dbReference>
<dbReference type="FunFam" id="3.30.56.70:FF:000001">
    <property type="entry name" value="tRNA (guanine(26)-N(2))-dimethyltransferase"/>
    <property type="match status" value="1"/>
</dbReference>
<dbReference type="FunFam" id="3.40.50.150:FF:000272">
    <property type="entry name" value="tRNA (guanine(26)-N(2))-dimethyltransferase"/>
    <property type="match status" value="1"/>
</dbReference>
<dbReference type="Gene3D" id="3.30.56.70">
    <property type="entry name" value="N2,N2-dimethylguanosine tRNA methyltransferase, C-terminal domain"/>
    <property type="match status" value="1"/>
</dbReference>
<dbReference type="Gene3D" id="3.40.50.150">
    <property type="entry name" value="Vaccinia Virus protein VP39"/>
    <property type="match status" value="1"/>
</dbReference>
<dbReference type="HAMAP" id="MF_00290">
    <property type="entry name" value="tRNA_dimethyltr_TRM1"/>
    <property type="match status" value="1"/>
</dbReference>
<dbReference type="InterPro" id="IPR029063">
    <property type="entry name" value="SAM-dependent_MTases_sf"/>
</dbReference>
<dbReference type="InterPro" id="IPR002905">
    <property type="entry name" value="Trm1"/>
</dbReference>
<dbReference type="InterPro" id="IPR022923">
    <property type="entry name" value="TRM1_arc_bac"/>
</dbReference>
<dbReference type="InterPro" id="IPR042296">
    <property type="entry name" value="tRNA_met_Trm1_C"/>
</dbReference>
<dbReference type="NCBIfam" id="TIGR00308">
    <property type="entry name" value="TRM1"/>
    <property type="match status" value="1"/>
</dbReference>
<dbReference type="PANTHER" id="PTHR10631">
    <property type="entry name" value="N 2 ,N 2 -DIMETHYLGUANOSINE TRNA METHYLTRANSFERASE"/>
    <property type="match status" value="1"/>
</dbReference>
<dbReference type="PANTHER" id="PTHR10631:SF3">
    <property type="entry name" value="TRNA (GUANINE(26)-N(2))-DIMETHYLTRANSFERASE"/>
    <property type="match status" value="1"/>
</dbReference>
<dbReference type="Pfam" id="PF02005">
    <property type="entry name" value="TRM"/>
    <property type="match status" value="1"/>
</dbReference>
<dbReference type="SUPFAM" id="SSF53335">
    <property type="entry name" value="S-adenosyl-L-methionine-dependent methyltransferases"/>
    <property type="match status" value="1"/>
</dbReference>
<dbReference type="PROSITE" id="PS51626">
    <property type="entry name" value="SAM_MT_TRM1"/>
    <property type="match status" value="1"/>
</dbReference>
<comment type="function">
    <text evidence="1">Dimethylates a single guanine residue at position 26 of a number of tRNAs using S-adenosyl-L-methionine as donor of the methyl groups.</text>
</comment>
<comment type="catalytic activity">
    <reaction evidence="1">
        <text>guanosine(26) in tRNA + 2 S-adenosyl-L-methionine = N(2)-dimethylguanosine(26) in tRNA + 2 S-adenosyl-L-homocysteine + 2 H(+)</text>
        <dbReference type="Rhea" id="RHEA:43140"/>
        <dbReference type="Rhea" id="RHEA-COMP:10359"/>
        <dbReference type="Rhea" id="RHEA-COMP:10360"/>
        <dbReference type="ChEBI" id="CHEBI:15378"/>
        <dbReference type="ChEBI" id="CHEBI:57856"/>
        <dbReference type="ChEBI" id="CHEBI:59789"/>
        <dbReference type="ChEBI" id="CHEBI:74269"/>
        <dbReference type="ChEBI" id="CHEBI:74513"/>
        <dbReference type="EC" id="2.1.1.216"/>
    </reaction>
</comment>
<comment type="similarity">
    <text evidence="1">Belongs to the class I-like SAM-binding methyltransferase superfamily. Trm1 family.</text>
</comment>
<sequence>MITVNEGSVTIRVPDFSKVSARAPVFYNPAMEFNRDVSVVALQVFQRLLGGEISVADTFSGSGIRAIRYLVEVEGVSEAFANDINPLAVECIKNNSVINSVSPEVSREDASIFLRSNHGRFDVIDIDPFGTPAPFMDSAAASARNNSLLAVTATDTSSLCGTYIKPCLRKYSSRPLKTEYCHETGLRILAGFTAMNLARYRKAASVLLSHSSQHYMRLYIRVRRGARRADESIRNIGFMLHCFRCLHHEHVNGFAPLKRECPHCGAEMDVAGPLWVGDIQDSKFIGEMIGEVENKELNTAGDVLKLLKGCLDEAGMPPGFYDIHEVCSKLGRSAPPLRDVMDGLEAAGFRVSRTHIRPTGIRTDAGIGEIEEVLAGLMPE</sequence>
<evidence type="ECO:0000255" key="1">
    <source>
        <dbReference type="HAMAP-Rule" id="MF_00290"/>
    </source>
</evidence>
<organism>
    <name type="scientific">Methanothermobacter thermautotrophicus (strain ATCC 29096 / DSM 1053 / JCM 10044 / NBRC 100330 / Delta H)</name>
    <name type="common">Methanobacterium thermoautotrophicum</name>
    <dbReference type="NCBI Taxonomy" id="187420"/>
    <lineage>
        <taxon>Archaea</taxon>
        <taxon>Methanobacteriati</taxon>
        <taxon>Methanobacteriota</taxon>
        <taxon>Methanomada group</taxon>
        <taxon>Methanobacteria</taxon>
        <taxon>Methanobacteriales</taxon>
        <taxon>Methanobacteriaceae</taxon>
        <taxon>Methanothermobacter</taxon>
    </lineage>
</organism>
<keyword id="KW-0479">Metal-binding</keyword>
<keyword id="KW-0489">Methyltransferase</keyword>
<keyword id="KW-1185">Reference proteome</keyword>
<keyword id="KW-0694">RNA-binding</keyword>
<keyword id="KW-0949">S-adenosyl-L-methionine</keyword>
<keyword id="KW-0808">Transferase</keyword>
<keyword id="KW-0819">tRNA processing</keyword>
<keyword id="KW-0820">tRNA-binding</keyword>
<keyword id="KW-0862">Zinc</keyword>
<accession>O27258</accession>
<gene>
    <name evidence="1" type="primary">trm1</name>
    <name type="ordered locus">MTH_1190</name>
</gene>